<dbReference type="EMBL" id="AK012145">
    <property type="protein sequence ID" value="BAC25357.1"/>
    <property type="status" value="ALT_FRAME"/>
    <property type="molecule type" value="mRNA"/>
</dbReference>
<dbReference type="EMBL" id="AK034055">
    <property type="protein sequence ID" value="BAC28563.1"/>
    <property type="status" value="ALT_FRAME"/>
    <property type="molecule type" value="mRNA"/>
</dbReference>
<dbReference type="EMBL" id="AL954299">
    <property type="status" value="NOT_ANNOTATED_CDS"/>
    <property type="molecule type" value="Genomic_DNA"/>
</dbReference>
<dbReference type="EMBL" id="BC003464">
    <property type="protein sequence ID" value="AAH03464.1"/>
    <property type="molecule type" value="mRNA"/>
</dbReference>
<dbReference type="EMBL" id="BC010234">
    <property type="protein sequence ID" value="AAH10234.1"/>
    <property type="molecule type" value="mRNA"/>
</dbReference>
<dbReference type="EMBL" id="BC040084">
    <property type="protein sequence ID" value="AAH40084.1"/>
    <property type="molecule type" value="mRNA"/>
</dbReference>
<dbReference type="CCDS" id="CCDS38095.1"/>
<dbReference type="RefSeq" id="NP_084520.3">
    <property type="nucleotide sequence ID" value="NM_030244.3"/>
</dbReference>
<dbReference type="SMR" id="Q99J55"/>
<dbReference type="BioGRID" id="215402">
    <property type="interactions" value="1"/>
</dbReference>
<dbReference type="FunCoup" id="Q99J55">
    <property type="interactions" value="5"/>
</dbReference>
<dbReference type="STRING" id="10090.ENSMUSP00000132594"/>
<dbReference type="PhosphoSitePlus" id="Q99J55"/>
<dbReference type="SwissPalm" id="Q99J55"/>
<dbReference type="PaxDb" id="10090-ENSMUSP00000132594"/>
<dbReference type="Antibodypedia" id="7862">
    <property type="antibodies" value="41 antibodies from 13 providers"/>
</dbReference>
<dbReference type="Ensembl" id="ENSMUST00000065134.4">
    <property type="protein sequence ID" value="ENSMUSP00000132594.2"/>
    <property type="gene ID" value="ENSMUSG00000089762.4"/>
</dbReference>
<dbReference type="GeneID" id="72500"/>
<dbReference type="KEGG" id="mmu:72500"/>
<dbReference type="UCSC" id="uc008jco.1">
    <property type="organism name" value="mouse"/>
</dbReference>
<dbReference type="AGR" id="MGI:1919750"/>
<dbReference type="CTD" id="389792"/>
<dbReference type="MGI" id="MGI:1919750">
    <property type="gene designation" value="Ier5l"/>
</dbReference>
<dbReference type="VEuPathDB" id="HostDB:ENSMUSG00000089762"/>
<dbReference type="eggNOG" id="ENOG502QUU4">
    <property type="taxonomic scope" value="Eukaryota"/>
</dbReference>
<dbReference type="GeneTree" id="ENSGT00900000141021"/>
<dbReference type="HOGENOM" id="CLU_057338_1_1_1"/>
<dbReference type="InParanoid" id="Q99J55"/>
<dbReference type="OMA" id="QDCCCDA"/>
<dbReference type="OrthoDB" id="6358394at2759"/>
<dbReference type="PhylomeDB" id="Q99J55"/>
<dbReference type="TreeFam" id="TF331376"/>
<dbReference type="BioGRID-ORCS" id="72500">
    <property type="hits" value="6 hits in 80 CRISPR screens"/>
</dbReference>
<dbReference type="ChiTaRS" id="Ier5l">
    <property type="organism name" value="mouse"/>
</dbReference>
<dbReference type="PRO" id="PR:Q99J55"/>
<dbReference type="Proteomes" id="UP000000589">
    <property type="component" value="Chromosome 2"/>
</dbReference>
<dbReference type="RNAct" id="Q99J55">
    <property type="molecule type" value="protein"/>
</dbReference>
<dbReference type="Bgee" id="ENSMUSG00000089762">
    <property type="expression patterns" value="Expressed in cerebellum ventricular layer and 164 other cell types or tissues"/>
</dbReference>
<dbReference type="InterPro" id="IPR008653">
    <property type="entry name" value="IER"/>
</dbReference>
<dbReference type="PANTHER" id="PTHR15895">
    <property type="entry name" value="IMMEDIATE EARLY RESPONSE GENE"/>
    <property type="match status" value="1"/>
</dbReference>
<dbReference type="Pfam" id="PF05760">
    <property type="entry name" value="IER"/>
    <property type="match status" value="1"/>
</dbReference>
<feature type="chain" id="PRO_0000334657" description="Immediate early response gene 5-like protein">
    <location>
        <begin position="1"/>
        <end position="406"/>
    </location>
</feature>
<feature type="region of interest" description="Disordered" evidence="1">
    <location>
        <begin position="166"/>
        <end position="195"/>
    </location>
</feature>
<feature type="region of interest" description="Disordered" evidence="1">
    <location>
        <begin position="216"/>
        <end position="235"/>
    </location>
</feature>
<feature type="compositionally biased region" description="Pro residues" evidence="1">
    <location>
        <begin position="182"/>
        <end position="193"/>
    </location>
</feature>
<feature type="sequence conflict" description="In Ref. 1; BAC25357." evidence="2" ref="1">
    <original>PG</original>
    <variation>RR</variation>
    <location>
        <begin position="160"/>
        <end position="161"/>
    </location>
</feature>
<feature type="sequence conflict" description="In Ref. 1; BAC25357." evidence="2" ref="1">
    <original>C</original>
    <variation>L</variation>
    <location>
        <position position="279"/>
    </location>
</feature>
<gene>
    <name type="primary">Ier5l</name>
</gene>
<reference key="1">
    <citation type="journal article" date="2005" name="Science">
        <title>The transcriptional landscape of the mammalian genome.</title>
        <authorList>
            <person name="Carninci P."/>
            <person name="Kasukawa T."/>
            <person name="Katayama S."/>
            <person name="Gough J."/>
            <person name="Frith M.C."/>
            <person name="Maeda N."/>
            <person name="Oyama R."/>
            <person name="Ravasi T."/>
            <person name="Lenhard B."/>
            <person name="Wells C."/>
            <person name="Kodzius R."/>
            <person name="Shimokawa K."/>
            <person name="Bajic V.B."/>
            <person name="Brenner S.E."/>
            <person name="Batalov S."/>
            <person name="Forrest A.R."/>
            <person name="Zavolan M."/>
            <person name="Davis M.J."/>
            <person name="Wilming L.G."/>
            <person name="Aidinis V."/>
            <person name="Allen J.E."/>
            <person name="Ambesi-Impiombato A."/>
            <person name="Apweiler R."/>
            <person name="Aturaliya R.N."/>
            <person name="Bailey T.L."/>
            <person name="Bansal M."/>
            <person name="Baxter L."/>
            <person name="Beisel K.W."/>
            <person name="Bersano T."/>
            <person name="Bono H."/>
            <person name="Chalk A.M."/>
            <person name="Chiu K.P."/>
            <person name="Choudhary V."/>
            <person name="Christoffels A."/>
            <person name="Clutterbuck D.R."/>
            <person name="Crowe M.L."/>
            <person name="Dalla E."/>
            <person name="Dalrymple B.P."/>
            <person name="de Bono B."/>
            <person name="Della Gatta G."/>
            <person name="di Bernardo D."/>
            <person name="Down T."/>
            <person name="Engstrom P."/>
            <person name="Fagiolini M."/>
            <person name="Faulkner G."/>
            <person name="Fletcher C.F."/>
            <person name="Fukushima T."/>
            <person name="Furuno M."/>
            <person name="Futaki S."/>
            <person name="Gariboldi M."/>
            <person name="Georgii-Hemming P."/>
            <person name="Gingeras T.R."/>
            <person name="Gojobori T."/>
            <person name="Green R.E."/>
            <person name="Gustincich S."/>
            <person name="Harbers M."/>
            <person name="Hayashi Y."/>
            <person name="Hensch T.K."/>
            <person name="Hirokawa N."/>
            <person name="Hill D."/>
            <person name="Huminiecki L."/>
            <person name="Iacono M."/>
            <person name="Ikeo K."/>
            <person name="Iwama A."/>
            <person name="Ishikawa T."/>
            <person name="Jakt M."/>
            <person name="Kanapin A."/>
            <person name="Katoh M."/>
            <person name="Kawasawa Y."/>
            <person name="Kelso J."/>
            <person name="Kitamura H."/>
            <person name="Kitano H."/>
            <person name="Kollias G."/>
            <person name="Krishnan S.P."/>
            <person name="Kruger A."/>
            <person name="Kummerfeld S.K."/>
            <person name="Kurochkin I.V."/>
            <person name="Lareau L.F."/>
            <person name="Lazarevic D."/>
            <person name="Lipovich L."/>
            <person name="Liu J."/>
            <person name="Liuni S."/>
            <person name="McWilliam S."/>
            <person name="Madan Babu M."/>
            <person name="Madera M."/>
            <person name="Marchionni L."/>
            <person name="Matsuda H."/>
            <person name="Matsuzawa S."/>
            <person name="Miki H."/>
            <person name="Mignone F."/>
            <person name="Miyake S."/>
            <person name="Morris K."/>
            <person name="Mottagui-Tabar S."/>
            <person name="Mulder N."/>
            <person name="Nakano N."/>
            <person name="Nakauchi H."/>
            <person name="Ng P."/>
            <person name="Nilsson R."/>
            <person name="Nishiguchi S."/>
            <person name="Nishikawa S."/>
            <person name="Nori F."/>
            <person name="Ohara O."/>
            <person name="Okazaki Y."/>
            <person name="Orlando V."/>
            <person name="Pang K.C."/>
            <person name="Pavan W.J."/>
            <person name="Pavesi G."/>
            <person name="Pesole G."/>
            <person name="Petrovsky N."/>
            <person name="Piazza S."/>
            <person name="Reed J."/>
            <person name="Reid J.F."/>
            <person name="Ring B.Z."/>
            <person name="Ringwald M."/>
            <person name="Rost B."/>
            <person name="Ruan Y."/>
            <person name="Salzberg S.L."/>
            <person name="Sandelin A."/>
            <person name="Schneider C."/>
            <person name="Schoenbach C."/>
            <person name="Sekiguchi K."/>
            <person name="Semple C.A."/>
            <person name="Seno S."/>
            <person name="Sessa L."/>
            <person name="Sheng Y."/>
            <person name="Shibata Y."/>
            <person name="Shimada H."/>
            <person name="Shimada K."/>
            <person name="Silva D."/>
            <person name="Sinclair B."/>
            <person name="Sperling S."/>
            <person name="Stupka E."/>
            <person name="Sugiura K."/>
            <person name="Sultana R."/>
            <person name="Takenaka Y."/>
            <person name="Taki K."/>
            <person name="Tammoja K."/>
            <person name="Tan S.L."/>
            <person name="Tang S."/>
            <person name="Taylor M.S."/>
            <person name="Tegner J."/>
            <person name="Teichmann S.A."/>
            <person name="Ueda H.R."/>
            <person name="van Nimwegen E."/>
            <person name="Verardo R."/>
            <person name="Wei C.L."/>
            <person name="Yagi K."/>
            <person name="Yamanishi H."/>
            <person name="Zabarovsky E."/>
            <person name="Zhu S."/>
            <person name="Zimmer A."/>
            <person name="Hide W."/>
            <person name="Bult C."/>
            <person name="Grimmond S.M."/>
            <person name="Teasdale R.D."/>
            <person name="Liu E.T."/>
            <person name="Brusic V."/>
            <person name="Quackenbush J."/>
            <person name="Wahlestedt C."/>
            <person name="Mattick J.S."/>
            <person name="Hume D.A."/>
            <person name="Kai C."/>
            <person name="Sasaki D."/>
            <person name="Tomaru Y."/>
            <person name="Fukuda S."/>
            <person name="Kanamori-Katayama M."/>
            <person name="Suzuki M."/>
            <person name="Aoki J."/>
            <person name="Arakawa T."/>
            <person name="Iida J."/>
            <person name="Imamura K."/>
            <person name="Itoh M."/>
            <person name="Kato T."/>
            <person name="Kawaji H."/>
            <person name="Kawagashira N."/>
            <person name="Kawashima T."/>
            <person name="Kojima M."/>
            <person name="Kondo S."/>
            <person name="Konno H."/>
            <person name="Nakano K."/>
            <person name="Ninomiya N."/>
            <person name="Nishio T."/>
            <person name="Okada M."/>
            <person name="Plessy C."/>
            <person name="Shibata K."/>
            <person name="Shiraki T."/>
            <person name="Suzuki S."/>
            <person name="Tagami M."/>
            <person name="Waki K."/>
            <person name="Watahiki A."/>
            <person name="Okamura-Oho Y."/>
            <person name="Suzuki H."/>
            <person name="Kawai J."/>
            <person name="Hayashizaki Y."/>
        </authorList>
    </citation>
    <scope>NUCLEOTIDE SEQUENCE [LARGE SCALE MRNA]</scope>
    <source>
        <strain>C57BL/6J</strain>
        <tissue>Diencephalon</tissue>
    </source>
</reference>
<reference key="2">
    <citation type="journal article" date="2009" name="PLoS Biol.">
        <title>Lineage-specific biology revealed by a finished genome assembly of the mouse.</title>
        <authorList>
            <person name="Church D.M."/>
            <person name="Goodstadt L."/>
            <person name="Hillier L.W."/>
            <person name="Zody M.C."/>
            <person name="Goldstein S."/>
            <person name="She X."/>
            <person name="Bult C.J."/>
            <person name="Agarwala R."/>
            <person name="Cherry J.L."/>
            <person name="DiCuccio M."/>
            <person name="Hlavina W."/>
            <person name="Kapustin Y."/>
            <person name="Meric P."/>
            <person name="Maglott D."/>
            <person name="Birtle Z."/>
            <person name="Marques A.C."/>
            <person name="Graves T."/>
            <person name="Zhou S."/>
            <person name="Teague B."/>
            <person name="Potamousis K."/>
            <person name="Churas C."/>
            <person name="Place M."/>
            <person name="Herschleb J."/>
            <person name="Runnheim R."/>
            <person name="Forrest D."/>
            <person name="Amos-Landgraf J."/>
            <person name="Schwartz D.C."/>
            <person name="Cheng Z."/>
            <person name="Lindblad-Toh K."/>
            <person name="Eichler E.E."/>
            <person name="Ponting C.P."/>
        </authorList>
    </citation>
    <scope>NUCLEOTIDE SEQUENCE [LARGE SCALE GENOMIC DNA]</scope>
    <source>
        <strain>C57BL/6J</strain>
    </source>
</reference>
<reference key="3">
    <citation type="journal article" date="2004" name="Genome Res.">
        <title>The status, quality, and expansion of the NIH full-length cDNA project: the Mammalian Gene Collection (MGC).</title>
        <authorList>
            <consortium name="The MGC Project Team"/>
        </authorList>
    </citation>
    <scope>NUCLEOTIDE SEQUENCE [LARGE SCALE MRNA]</scope>
    <source>
        <strain>129</strain>
        <strain>FVB/N</strain>
        <tissue>Mammary tumor</tissue>
    </source>
</reference>
<organism>
    <name type="scientific">Mus musculus</name>
    <name type="common">Mouse</name>
    <dbReference type="NCBI Taxonomy" id="10090"/>
    <lineage>
        <taxon>Eukaryota</taxon>
        <taxon>Metazoa</taxon>
        <taxon>Chordata</taxon>
        <taxon>Craniata</taxon>
        <taxon>Vertebrata</taxon>
        <taxon>Euteleostomi</taxon>
        <taxon>Mammalia</taxon>
        <taxon>Eutheria</taxon>
        <taxon>Euarchontoglires</taxon>
        <taxon>Glires</taxon>
        <taxon>Rodentia</taxon>
        <taxon>Myomorpha</taxon>
        <taxon>Muroidea</taxon>
        <taxon>Muridae</taxon>
        <taxon>Murinae</taxon>
        <taxon>Mus</taxon>
        <taxon>Mus</taxon>
    </lineage>
</organism>
<proteinExistence type="evidence at transcript level"/>
<sequence length="406" mass="42530">MECALDAQSLISISLRKIHSSRTQRGGIKLHKNLLVSYVLRNARQLYLSERYAELYRRQQQQQQQQPPHHQHQHLAYAAPGMPASAADFGPLQLGGGGDAEAREPVARHQLHQLHQLHQLHLQQQLHQHQHPAPRGCTAAAPVAVAGAPAGCAGALSELPGCAALQPPHGAPHRGQHLEPLQPGPAPLPPPAPAALCPRDPRVPAACSAPSVLPGAAPSTVAASSPPASTAPSSSTGFYRGAYPAPSDFGVHCSSQTTVLDLDTHVVTTVENGYLHQDCCASAHCPCCGQGAPGPGLASAAGCKRKYYPGQEEEDDEEDAGDLGAEPPGGTPFAPCKRARFEDFCPDSSPDASNISNLISIFGSGFSGLVSRQPDSSEQPPPLNGQLCAKQALASLGAWTRAIVAF</sequence>
<keyword id="KW-1185">Reference proteome</keyword>
<accession>Q99J55</accession>
<accession>Q8BTA0</accession>
<accession>Q8CC26</accession>
<name>IER5L_MOUSE</name>
<evidence type="ECO:0000256" key="1">
    <source>
        <dbReference type="SAM" id="MobiDB-lite"/>
    </source>
</evidence>
<evidence type="ECO:0000305" key="2"/>
<protein>
    <recommendedName>
        <fullName>Immediate early response gene 5-like protein</fullName>
    </recommendedName>
</protein>
<comment type="similarity">
    <text evidence="2">Belongs to the IER family.</text>
</comment>
<comment type="sequence caution" evidence="2">
    <conflict type="frameshift">
        <sequence resource="EMBL-CDS" id="BAC25357"/>
    </conflict>
</comment>
<comment type="sequence caution" evidence="2">
    <conflict type="frameshift">
        <sequence resource="EMBL-CDS" id="BAC28563"/>
    </conflict>
</comment>